<evidence type="ECO:0000255" key="1">
    <source>
        <dbReference type="HAMAP-Rule" id="MF_00366"/>
    </source>
</evidence>
<proteinExistence type="inferred from homology"/>
<accession>B7IAU2</accession>
<dbReference type="EC" id="2.7.7.6" evidence="1"/>
<dbReference type="EMBL" id="CP001182">
    <property type="protein sequence ID" value="ACJ42989.1"/>
    <property type="molecule type" value="Genomic_DNA"/>
</dbReference>
<dbReference type="RefSeq" id="WP_000135049.1">
    <property type="nucleotide sequence ID" value="NC_011586.2"/>
</dbReference>
<dbReference type="SMR" id="B7IAU2"/>
<dbReference type="GeneID" id="92895409"/>
<dbReference type="KEGG" id="abn:AB57_3628"/>
<dbReference type="HOGENOM" id="CLU_125406_5_3_6"/>
<dbReference type="Proteomes" id="UP000007094">
    <property type="component" value="Chromosome"/>
</dbReference>
<dbReference type="GO" id="GO:0000428">
    <property type="term" value="C:DNA-directed RNA polymerase complex"/>
    <property type="evidence" value="ECO:0007669"/>
    <property type="project" value="UniProtKB-KW"/>
</dbReference>
<dbReference type="GO" id="GO:0003677">
    <property type="term" value="F:DNA binding"/>
    <property type="evidence" value="ECO:0007669"/>
    <property type="project" value="UniProtKB-UniRule"/>
</dbReference>
<dbReference type="GO" id="GO:0003899">
    <property type="term" value="F:DNA-directed RNA polymerase activity"/>
    <property type="evidence" value="ECO:0007669"/>
    <property type="project" value="UniProtKB-UniRule"/>
</dbReference>
<dbReference type="GO" id="GO:0006351">
    <property type="term" value="P:DNA-templated transcription"/>
    <property type="evidence" value="ECO:0007669"/>
    <property type="project" value="UniProtKB-UniRule"/>
</dbReference>
<dbReference type="Gene3D" id="3.90.940.10">
    <property type="match status" value="1"/>
</dbReference>
<dbReference type="HAMAP" id="MF_00366">
    <property type="entry name" value="RNApol_bact_RpoZ"/>
    <property type="match status" value="1"/>
</dbReference>
<dbReference type="InterPro" id="IPR003716">
    <property type="entry name" value="DNA-dir_RNA_pol_omega"/>
</dbReference>
<dbReference type="InterPro" id="IPR006110">
    <property type="entry name" value="Pol_omega/Rpo6/RPB6"/>
</dbReference>
<dbReference type="InterPro" id="IPR036161">
    <property type="entry name" value="RPB6/omega-like_sf"/>
</dbReference>
<dbReference type="NCBIfam" id="TIGR00690">
    <property type="entry name" value="rpoZ"/>
    <property type="match status" value="1"/>
</dbReference>
<dbReference type="PANTHER" id="PTHR34476">
    <property type="entry name" value="DNA-DIRECTED RNA POLYMERASE SUBUNIT OMEGA"/>
    <property type="match status" value="1"/>
</dbReference>
<dbReference type="PANTHER" id="PTHR34476:SF1">
    <property type="entry name" value="DNA-DIRECTED RNA POLYMERASE SUBUNIT OMEGA"/>
    <property type="match status" value="1"/>
</dbReference>
<dbReference type="Pfam" id="PF01192">
    <property type="entry name" value="RNA_pol_Rpb6"/>
    <property type="match status" value="1"/>
</dbReference>
<dbReference type="SMART" id="SM01409">
    <property type="entry name" value="RNA_pol_Rpb6"/>
    <property type="match status" value="1"/>
</dbReference>
<dbReference type="SUPFAM" id="SSF63562">
    <property type="entry name" value="RPB6/omega subunit-like"/>
    <property type="match status" value="1"/>
</dbReference>
<name>RPOZ_ACIB5</name>
<organism>
    <name type="scientific">Acinetobacter baumannii (strain AB0057)</name>
    <dbReference type="NCBI Taxonomy" id="480119"/>
    <lineage>
        <taxon>Bacteria</taxon>
        <taxon>Pseudomonadati</taxon>
        <taxon>Pseudomonadota</taxon>
        <taxon>Gammaproteobacteria</taxon>
        <taxon>Moraxellales</taxon>
        <taxon>Moraxellaceae</taxon>
        <taxon>Acinetobacter</taxon>
        <taxon>Acinetobacter calcoaceticus/baumannii complex</taxon>
    </lineage>
</organism>
<keyword id="KW-0240">DNA-directed RNA polymerase</keyword>
<keyword id="KW-0548">Nucleotidyltransferase</keyword>
<keyword id="KW-0804">Transcription</keyword>
<keyword id="KW-0808">Transferase</keyword>
<gene>
    <name evidence="1" type="primary">rpoZ</name>
    <name type="ordered locus">AB57_3628</name>
</gene>
<comment type="function">
    <text evidence="1">Promotes RNA polymerase assembly. Latches the N- and C-terminal regions of the beta' subunit thereby facilitating its interaction with the beta and alpha subunits.</text>
</comment>
<comment type="catalytic activity">
    <reaction evidence="1">
        <text>RNA(n) + a ribonucleoside 5'-triphosphate = RNA(n+1) + diphosphate</text>
        <dbReference type="Rhea" id="RHEA:21248"/>
        <dbReference type="Rhea" id="RHEA-COMP:14527"/>
        <dbReference type="Rhea" id="RHEA-COMP:17342"/>
        <dbReference type="ChEBI" id="CHEBI:33019"/>
        <dbReference type="ChEBI" id="CHEBI:61557"/>
        <dbReference type="ChEBI" id="CHEBI:140395"/>
        <dbReference type="EC" id="2.7.7.6"/>
    </reaction>
</comment>
<comment type="subunit">
    <text evidence="1">The RNAP catalytic core consists of 2 alpha, 1 beta, 1 beta' and 1 omega subunit. When a sigma factor is associated with the core the holoenzyme is formed, which can initiate transcription.</text>
</comment>
<comment type="similarity">
    <text evidence="1">Belongs to the RNA polymerase subunit omega family.</text>
</comment>
<feature type="chain" id="PRO_1000121175" description="DNA-directed RNA polymerase subunit omega">
    <location>
        <begin position="1"/>
        <end position="92"/>
    </location>
</feature>
<sequence length="92" mass="10445">MARVTVEDCLDHVDNRFELVLVASKRARQLARQGMEPTVEWDNDKPTVVALREIAVGHVTKEILKQREQDYQTSSLDLALSTNSLNLEGFSF</sequence>
<reference key="1">
    <citation type="journal article" date="2008" name="J. Bacteriol.">
        <title>Comparative genome sequence analysis of multidrug-resistant Acinetobacter baumannii.</title>
        <authorList>
            <person name="Adams M.D."/>
            <person name="Goglin K."/>
            <person name="Molyneaux N."/>
            <person name="Hujer K.M."/>
            <person name="Lavender H."/>
            <person name="Jamison J.J."/>
            <person name="MacDonald I.J."/>
            <person name="Martin K.M."/>
            <person name="Russo T."/>
            <person name="Campagnari A.A."/>
            <person name="Hujer A.M."/>
            <person name="Bonomo R.A."/>
            <person name="Gill S.R."/>
        </authorList>
    </citation>
    <scope>NUCLEOTIDE SEQUENCE [LARGE SCALE GENOMIC DNA]</scope>
    <source>
        <strain>AB0057</strain>
    </source>
</reference>
<protein>
    <recommendedName>
        <fullName evidence="1">DNA-directed RNA polymerase subunit omega</fullName>
        <shortName evidence="1">RNAP omega subunit</shortName>
        <ecNumber evidence="1">2.7.7.6</ecNumber>
    </recommendedName>
    <alternativeName>
        <fullName evidence="1">RNA polymerase omega subunit</fullName>
    </alternativeName>
    <alternativeName>
        <fullName evidence="1">Transcriptase subunit omega</fullName>
    </alternativeName>
</protein>